<keyword id="KW-0378">Hydrolase</keyword>
<keyword id="KW-0460">Magnesium</keyword>
<keyword id="KW-0479">Metal-binding</keyword>
<keyword id="KW-0546">Nucleotide metabolism</keyword>
<protein>
    <recommendedName>
        <fullName evidence="2">Deoxyuridine 5'-triphosphate nucleotidohydrolase</fullName>
        <shortName evidence="2">dUTPase</shortName>
        <ecNumber evidence="2">3.6.1.23</ecNumber>
    </recommendedName>
    <alternativeName>
        <fullName evidence="2">dUTP pyrophosphatase</fullName>
    </alternativeName>
</protein>
<comment type="function">
    <text evidence="2">This enzyme is involved in nucleotide metabolism: it produces dUMP, the immediate precursor of thymidine nucleotides and it decreases the intracellular concentration of dUTP so that uracil cannot be incorporated into DNA.</text>
</comment>
<comment type="catalytic activity">
    <reaction evidence="2">
        <text>dUTP + H2O = dUMP + diphosphate + H(+)</text>
        <dbReference type="Rhea" id="RHEA:10248"/>
        <dbReference type="ChEBI" id="CHEBI:15377"/>
        <dbReference type="ChEBI" id="CHEBI:15378"/>
        <dbReference type="ChEBI" id="CHEBI:33019"/>
        <dbReference type="ChEBI" id="CHEBI:61555"/>
        <dbReference type="ChEBI" id="CHEBI:246422"/>
        <dbReference type="EC" id="3.6.1.23"/>
    </reaction>
</comment>
<comment type="cofactor">
    <cofactor evidence="2">
        <name>Mg(2+)</name>
        <dbReference type="ChEBI" id="CHEBI:18420"/>
    </cofactor>
</comment>
<comment type="pathway">
    <text evidence="2">Pyrimidine metabolism; dUMP biosynthesis; dUMP from dCTP (dUTP route): step 2/2.</text>
</comment>
<comment type="subunit">
    <text evidence="2">Homotrimer.</text>
</comment>
<comment type="miscellaneous">
    <text evidence="1">Each trimer binds three substrate molecules. The ligands are bound between subunits, and for each substrate molecule, residues from adjacent subunits contribute to the binding interactions (By similarity).</text>
</comment>
<comment type="similarity">
    <text evidence="2">Belongs to the dUTPase family.</text>
</comment>
<organism>
    <name type="scientific">Mycobacterium avium (strain 104)</name>
    <dbReference type="NCBI Taxonomy" id="243243"/>
    <lineage>
        <taxon>Bacteria</taxon>
        <taxon>Bacillati</taxon>
        <taxon>Actinomycetota</taxon>
        <taxon>Actinomycetes</taxon>
        <taxon>Mycobacteriales</taxon>
        <taxon>Mycobacteriaceae</taxon>
        <taxon>Mycobacterium</taxon>
        <taxon>Mycobacterium avium complex (MAC)</taxon>
    </lineage>
</organism>
<evidence type="ECO:0000250" key="1"/>
<evidence type="ECO:0000255" key="2">
    <source>
        <dbReference type="HAMAP-Rule" id="MF_00116"/>
    </source>
</evidence>
<name>DUT_MYCA1</name>
<dbReference type="EC" id="3.6.1.23" evidence="2"/>
<dbReference type="EMBL" id="CP000479">
    <property type="protein sequence ID" value="ABK68644.1"/>
    <property type="molecule type" value="Genomic_DNA"/>
</dbReference>
<dbReference type="RefSeq" id="WP_003875248.1">
    <property type="nucleotide sequence ID" value="NC_008595.1"/>
</dbReference>
<dbReference type="SMR" id="A0QIM8"/>
<dbReference type="GeneID" id="75270977"/>
<dbReference type="KEGG" id="mav:MAV_3589"/>
<dbReference type="HOGENOM" id="CLU_068508_1_3_11"/>
<dbReference type="UniPathway" id="UPA00610">
    <property type="reaction ID" value="UER00666"/>
</dbReference>
<dbReference type="Proteomes" id="UP000001574">
    <property type="component" value="Chromosome"/>
</dbReference>
<dbReference type="GO" id="GO:0004170">
    <property type="term" value="F:dUTP diphosphatase activity"/>
    <property type="evidence" value="ECO:0007669"/>
    <property type="project" value="UniProtKB-UniRule"/>
</dbReference>
<dbReference type="GO" id="GO:0000287">
    <property type="term" value="F:magnesium ion binding"/>
    <property type="evidence" value="ECO:0007669"/>
    <property type="project" value="UniProtKB-UniRule"/>
</dbReference>
<dbReference type="GO" id="GO:0006226">
    <property type="term" value="P:dUMP biosynthetic process"/>
    <property type="evidence" value="ECO:0007669"/>
    <property type="project" value="UniProtKB-UniRule"/>
</dbReference>
<dbReference type="GO" id="GO:0046081">
    <property type="term" value="P:dUTP catabolic process"/>
    <property type="evidence" value="ECO:0007669"/>
    <property type="project" value="InterPro"/>
</dbReference>
<dbReference type="CDD" id="cd07557">
    <property type="entry name" value="trimeric_dUTPase"/>
    <property type="match status" value="1"/>
</dbReference>
<dbReference type="FunFam" id="2.70.40.10:FF:000008">
    <property type="entry name" value="Deoxyuridine 5'-triphosphate nucleotidohydrolase"/>
    <property type="match status" value="1"/>
</dbReference>
<dbReference type="Gene3D" id="2.70.40.10">
    <property type="match status" value="1"/>
</dbReference>
<dbReference type="HAMAP" id="MF_00116">
    <property type="entry name" value="dUTPase_bact"/>
    <property type="match status" value="1"/>
</dbReference>
<dbReference type="InterPro" id="IPR008181">
    <property type="entry name" value="dUTPase"/>
</dbReference>
<dbReference type="InterPro" id="IPR029054">
    <property type="entry name" value="dUTPase-like"/>
</dbReference>
<dbReference type="InterPro" id="IPR036157">
    <property type="entry name" value="dUTPase-like_sf"/>
</dbReference>
<dbReference type="InterPro" id="IPR033704">
    <property type="entry name" value="dUTPase_trimeric"/>
</dbReference>
<dbReference type="NCBIfam" id="TIGR00576">
    <property type="entry name" value="dut"/>
    <property type="match status" value="1"/>
</dbReference>
<dbReference type="NCBIfam" id="NF001862">
    <property type="entry name" value="PRK00601.1"/>
    <property type="match status" value="1"/>
</dbReference>
<dbReference type="PANTHER" id="PTHR11241">
    <property type="entry name" value="DEOXYURIDINE 5'-TRIPHOSPHATE NUCLEOTIDOHYDROLASE"/>
    <property type="match status" value="1"/>
</dbReference>
<dbReference type="PANTHER" id="PTHR11241:SF0">
    <property type="entry name" value="DEOXYURIDINE 5'-TRIPHOSPHATE NUCLEOTIDOHYDROLASE"/>
    <property type="match status" value="1"/>
</dbReference>
<dbReference type="Pfam" id="PF00692">
    <property type="entry name" value="dUTPase"/>
    <property type="match status" value="1"/>
</dbReference>
<dbReference type="SUPFAM" id="SSF51283">
    <property type="entry name" value="dUTPase-like"/>
    <property type="match status" value="1"/>
</dbReference>
<proteinExistence type="inferred from homology"/>
<gene>
    <name evidence="2" type="primary">dut</name>
    <name type="ordered locus">MAV_3589</name>
</gene>
<feature type="chain" id="PRO_1000015483" description="Deoxyuridine 5'-triphosphate nucleotidohydrolase">
    <location>
        <begin position="1"/>
        <end position="154"/>
    </location>
</feature>
<feature type="binding site" evidence="2">
    <location>
        <begin position="64"/>
        <end position="66"/>
    </location>
    <ligand>
        <name>substrate</name>
    </ligand>
</feature>
<feature type="binding site" evidence="2">
    <location>
        <position position="77"/>
    </location>
    <ligand>
        <name>substrate</name>
    </ligand>
</feature>
<feature type="binding site" evidence="2">
    <location>
        <begin position="81"/>
        <end position="83"/>
    </location>
    <ligand>
        <name>substrate</name>
    </ligand>
</feature>
<feature type="binding site" evidence="2">
    <location>
        <position position="91"/>
    </location>
    <ligand>
        <name>substrate</name>
    </ligand>
</feature>
<reference key="1">
    <citation type="submission" date="2006-10" db="EMBL/GenBank/DDBJ databases">
        <authorList>
            <person name="Fleischmann R.D."/>
            <person name="Dodson R.J."/>
            <person name="Haft D.H."/>
            <person name="Merkel J.S."/>
            <person name="Nelson W.C."/>
            <person name="Fraser C.M."/>
        </authorList>
    </citation>
    <scope>NUCLEOTIDE SEQUENCE [LARGE SCALE GENOMIC DNA]</scope>
    <source>
        <strain>104</strain>
    </source>
</reference>
<accession>A0QIM8</accession>
<sequence length="154" mass="15900">MSTSLAIVRLDPGLPLPSRAHEGDAGVDLYSAEDVRLEPGRRALVRTGVAVAIPFGMVGLVHPRSGLAARVGLSIVNSPGTIDAGYRGEIKVALINLDPAEPIVVHRGDRIAQLLVQRVELVELVEVSSFDEAGLAGTSRGDGGHGSSGGHASL</sequence>